<proteinExistence type="evidence at protein level"/>
<dbReference type="PIR" id="C04620">
    <property type="entry name" value="HABAG"/>
</dbReference>
<dbReference type="SMR" id="P01932"/>
<dbReference type="Proteomes" id="UP000694411">
    <property type="component" value="Unplaced"/>
</dbReference>
<dbReference type="GO" id="GO:0072562">
    <property type="term" value="C:blood microparticle"/>
    <property type="evidence" value="ECO:0007669"/>
    <property type="project" value="TreeGrafter"/>
</dbReference>
<dbReference type="GO" id="GO:0031838">
    <property type="term" value="C:haptoglobin-hemoglobin complex"/>
    <property type="evidence" value="ECO:0007669"/>
    <property type="project" value="TreeGrafter"/>
</dbReference>
<dbReference type="GO" id="GO:0005833">
    <property type="term" value="C:hemoglobin complex"/>
    <property type="evidence" value="ECO:0007669"/>
    <property type="project" value="InterPro"/>
</dbReference>
<dbReference type="GO" id="GO:0031720">
    <property type="term" value="F:haptoglobin binding"/>
    <property type="evidence" value="ECO:0007669"/>
    <property type="project" value="TreeGrafter"/>
</dbReference>
<dbReference type="GO" id="GO:0020037">
    <property type="term" value="F:heme binding"/>
    <property type="evidence" value="ECO:0007669"/>
    <property type="project" value="InterPro"/>
</dbReference>
<dbReference type="GO" id="GO:0005506">
    <property type="term" value="F:iron ion binding"/>
    <property type="evidence" value="ECO:0007669"/>
    <property type="project" value="InterPro"/>
</dbReference>
<dbReference type="GO" id="GO:0043177">
    <property type="term" value="F:organic acid binding"/>
    <property type="evidence" value="ECO:0007669"/>
    <property type="project" value="TreeGrafter"/>
</dbReference>
<dbReference type="GO" id="GO:0019825">
    <property type="term" value="F:oxygen binding"/>
    <property type="evidence" value="ECO:0007669"/>
    <property type="project" value="InterPro"/>
</dbReference>
<dbReference type="GO" id="GO:0005344">
    <property type="term" value="F:oxygen carrier activity"/>
    <property type="evidence" value="ECO:0007669"/>
    <property type="project" value="UniProtKB-KW"/>
</dbReference>
<dbReference type="GO" id="GO:0004601">
    <property type="term" value="F:peroxidase activity"/>
    <property type="evidence" value="ECO:0007669"/>
    <property type="project" value="TreeGrafter"/>
</dbReference>
<dbReference type="GO" id="GO:0042744">
    <property type="term" value="P:hydrogen peroxide catabolic process"/>
    <property type="evidence" value="ECO:0007669"/>
    <property type="project" value="TreeGrafter"/>
</dbReference>
<dbReference type="CDD" id="cd08927">
    <property type="entry name" value="Hb-alpha-like"/>
    <property type="match status" value="1"/>
</dbReference>
<dbReference type="FunFam" id="1.10.490.10:FF:000002">
    <property type="entry name" value="Hemoglobin subunit alpha"/>
    <property type="match status" value="1"/>
</dbReference>
<dbReference type="Gene3D" id="1.10.490.10">
    <property type="entry name" value="Globins"/>
    <property type="match status" value="1"/>
</dbReference>
<dbReference type="InterPro" id="IPR000971">
    <property type="entry name" value="Globin"/>
</dbReference>
<dbReference type="InterPro" id="IPR009050">
    <property type="entry name" value="Globin-like_sf"/>
</dbReference>
<dbReference type="InterPro" id="IPR012292">
    <property type="entry name" value="Globin/Proto"/>
</dbReference>
<dbReference type="InterPro" id="IPR002338">
    <property type="entry name" value="Hemoglobin_a-typ"/>
</dbReference>
<dbReference type="InterPro" id="IPR050056">
    <property type="entry name" value="Hemoglobin_oxygen_transport"/>
</dbReference>
<dbReference type="InterPro" id="IPR002339">
    <property type="entry name" value="Hemoglobin_pi"/>
</dbReference>
<dbReference type="PANTHER" id="PTHR11442">
    <property type="entry name" value="HEMOGLOBIN FAMILY MEMBER"/>
    <property type="match status" value="1"/>
</dbReference>
<dbReference type="PANTHER" id="PTHR11442:SF48">
    <property type="entry name" value="HEMOGLOBIN SUBUNIT ALPHA"/>
    <property type="match status" value="1"/>
</dbReference>
<dbReference type="Pfam" id="PF00042">
    <property type="entry name" value="Globin"/>
    <property type="match status" value="1"/>
</dbReference>
<dbReference type="PRINTS" id="PR00612">
    <property type="entry name" value="ALPHAHAEM"/>
</dbReference>
<dbReference type="PRINTS" id="PR00815">
    <property type="entry name" value="PIHAEM"/>
</dbReference>
<dbReference type="SUPFAM" id="SSF46458">
    <property type="entry name" value="Globin-like"/>
    <property type="match status" value="1"/>
</dbReference>
<dbReference type="PROSITE" id="PS01033">
    <property type="entry name" value="GLOBIN"/>
    <property type="match status" value="1"/>
</dbReference>
<protein>
    <recommendedName>
        <fullName>Hemoglobin subunit alpha</fullName>
    </recommendedName>
    <alternativeName>
        <fullName>Alpha-globin</fullName>
    </alternativeName>
    <alternativeName>
        <fullName>Hemoglobin alpha chain</fullName>
    </alternativeName>
    <component>
        <recommendedName>
            <fullName evidence="2">Hemopressin</fullName>
        </recommendedName>
    </component>
</protein>
<evidence type="ECO:0000250" key="1">
    <source>
        <dbReference type="UniProtKB" id="P01942"/>
    </source>
</evidence>
<evidence type="ECO:0000250" key="2">
    <source>
        <dbReference type="UniProtKB" id="P01946"/>
    </source>
</evidence>
<evidence type="ECO:0000250" key="3">
    <source>
        <dbReference type="UniProtKB" id="P69905"/>
    </source>
</evidence>
<evidence type="ECO:0000255" key="4">
    <source>
        <dbReference type="PROSITE-ProRule" id="PRU00238"/>
    </source>
</evidence>
<sequence>VLSPDDKKHVKDAWGKVGEHAGQYGAEALERMFLSFPTTKTYFPHFDLSHGSDQVKKHGKKVADALTLAVGHVDDMPQALSKLSDLHAHKLRVDPVNFKLLSHCLLVTLAAHLPAEFTPAVHASLDKFLASVSTVLTSKYR</sequence>
<comment type="function">
    <text>Involved in oxygen transport from the lung to the various peripheral tissues.</text>
</comment>
<comment type="function">
    <molecule>Hemopressin</molecule>
    <text evidence="2">Hemopressin acts as an antagonist peptide of the cannabinoid receptor CNR1. Hemopressin-binding efficiently blocks cannabinoid receptor CNR1 and subsequent signaling.</text>
</comment>
<comment type="subunit">
    <text>Heterotetramer of two alpha chains and two beta chains.</text>
</comment>
<comment type="tissue specificity">
    <text>Red blood cells.</text>
</comment>
<comment type="similarity">
    <text evidence="4">Belongs to the globin family.</text>
</comment>
<accession>P01932</accession>
<feature type="chain" id="PRO_0000052782" description="Hemoglobin subunit alpha">
    <location>
        <begin position="1"/>
        <end position="141"/>
    </location>
</feature>
<feature type="peptide" id="PRO_0000455952" description="Hemopressin" evidence="2">
    <location>
        <begin position="95"/>
        <end position="103"/>
    </location>
</feature>
<feature type="domain" description="Globin" evidence="4">
    <location>
        <begin position="1"/>
        <end position="141"/>
    </location>
</feature>
<feature type="binding site" evidence="4">
    <location>
        <position position="58"/>
    </location>
    <ligand>
        <name>O2</name>
        <dbReference type="ChEBI" id="CHEBI:15379"/>
    </ligand>
</feature>
<feature type="binding site" description="proximal binding residue" evidence="4">
    <location>
        <position position="87"/>
    </location>
    <ligand>
        <name>heme b</name>
        <dbReference type="ChEBI" id="CHEBI:60344"/>
    </ligand>
    <ligandPart>
        <name>Fe</name>
        <dbReference type="ChEBI" id="CHEBI:18248"/>
    </ligandPart>
</feature>
<feature type="modified residue" description="Phosphoserine" evidence="3">
    <location>
        <position position="3"/>
    </location>
</feature>
<feature type="modified residue" description="N6-succinyllysine" evidence="1">
    <location>
        <position position="7"/>
    </location>
</feature>
<feature type="modified residue" description="N6-succinyllysine" evidence="1">
    <location>
        <position position="11"/>
    </location>
</feature>
<feature type="modified residue" description="N6-acetyllysine; alternate" evidence="3">
    <location>
        <position position="16"/>
    </location>
</feature>
<feature type="modified residue" description="N6-succinyllysine; alternate" evidence="1">
    <location>
        <position position="16"/>
    </location>
</feature>
<feature type="modified residue" description="Phosphotyrosine" evidence="3">
    <location>
        <position position="24"/>
    </location>
</feature>
<feature type="modified residue" description="Phosphoserine" evidence="3">
    <location>
        <position position="35"/>
    </location>
</feature>
<feature type="modified residue" description="N6-succinyllysine" evidence="1">
    <location>
        <position position="40"/>
    </location>
</feature>
<feature type="modified residue" description="Phosphoserine" evidence="3">
    <location>
        <position position="49"/>
    </location>
</feature>
<feature type="modified residue" description="Phosphoserine" evidence="1">
    <location>
        <position position="102"/>
    </location>
</feature>
<feature type="modified residue" description="Phosphothreonine" evidence="1">
    <location>
        <position position="108"/>
    </location>
</feature>
<feature type="modified residue" description="Phosphoserine" evidence="1">
    <location>
        <position position="124"/>
    </location>
</feature>
<feature type="modified residue" description="Phosphoserine" evidence="1">
    <location>
        <position position="131"/>
    </location>
</feature>
<feature type="modified residue" description="Phosphothreonine" evidence="1">
    <location>
        <position position="134"/>
    </location>
</feature>
<feature type="modified residue" description="Phosphothreonine" evidence="1">
    <location>
        <position position="137"/>
    </location>
</feature>
<feature type="modified residue" description="Phosphoserine" evidence="1">
    <location>
        <position position="138"/>
    </location>
</feature>
<name>HBA_THEGE</name>
<gene>
    <name type="primary">HBA</name>
</gene>
<reference key="1">
    <citation type="thesis" date="1973" institute="University of London" country="United Kingdom">
        <title>Structural studies of Old World monkey haemoglobins in relation to phylogeny.</title>
        <authorList>
            <person name="Hewett-Emmett D."/>
        </authorList>
    </citation>
    <scope>PROTEIN SEQUENCE</scope>
</reference>
<organism>
    <name type="scientific">Theropithecus gelada</name>
    <name type="common">Gelada baboon</name>
    <dbReference type="NCBI Taxonomy" id="9565"/>
    <lineage>
        <taxon>Eukaryota</taxon>
        <taxon>Metazoa</taxon>
        <taxon>Chordata</taxon>
        <taxon>Craniata</taxon>
        <taxon>Vertebrata</taxon>
        <taxon>Euteleostomi</taxon>
        <taxon>Mammalia</taxon>
        <taxon>Eutheria</taxon>
        <taxon>Euarchontoglires</taxon>
        <taxon>Primates</taxon>
        <taxon>Haplorrhini</taxon>
        <taxon>Catarrhini</taxon>
        <taxon>Cercopithecidae</taxon>
        <taxon>Cercopithecinae</taxon>
        <taxon>Theropithecus</taxon>
    </lineage>
</organism>
<keyword id="KW-0007">Acetylation</keyword>
<keyword id="KW-0903">Direct protein sequencing</keyword>
<keyword id="KW-0349">Heme</keyword>
<keyword id="KW-0408">Iron</keyword>
<keyword id="KW-0479">Metal-binding</keyword>
<keyword id="KW-0561">Oxygen transport</keyword>
<keyword id="KW-0597">Phosphoprotein</keyword>
<keyword id="KW-1185">Reference proteome</keyword>
<keyword id="KW-0813">Transport</keyword>